<comment type="function">
    <text evidence="1">Antimicrobial peptide with activity against both Gram-positive and Gram-negative bacteria.</text>
</comment>
<comment type="subcellular location">
    <subcellularLocation>
        <location evidence="4">Secreted</location>
    </subcellularLocation>
</comment>
<comment type="tissue specificity">
    <text evidence="7">Expressed by the skin glands.</text>
</comment>
<comment type="mass spectrometry" mass="2829.95" method="MALDI" evidence="4"/>
<comment type="similarity">
    <text evidence="6">Belongs to the frog skin active peptide (FSAP) family. Frenatin subfamily.</text>
</comment>
<protein>
    <recommendedName>
        <fullName evidence="5">Frenatin 3.1</fullName>
    </recommendedName>
</protein>
<proteinExistence type="evidence at protein level"/>
<evidence type="ECO:0000250" key="1">
    <source>
        <dbReference type="UniProtKB" id="P56249"/>
    </source>
</evidence>
<evidence type="ECO:0000255" key="2"/>
<evidence type="ECO:0000256" key="3">
    <source>
        <dbReference type="SAM" id="MobiDB-lite"/>
    </source>
</evidence>
<evidence type="ECO:0000269" key="4">
    <source>
    </source>
</evidence>
<evidence type="ECO:0000303" key="5">
    <source>
    </source>
</evidence>
<evidence type="ECO:0000305" key="6"/>
<evidence type="ECO:0000305" key="7">
    <source>
    </source>
</evidence>
<name>FRE31_NYCIN</name>
<accession>Q571V4</accession>
<sequence length="73" mass="8282">MHFLKKSIFLVLFLGLVSLSICEKEKREDQNEEEVDENEEASEEKRGLMSILGKVAGNVLGGLFKPKENVQKM</sequence>
<dbReference type="EMBL" id="AJ937525">
    <property type="protein sequence ID" value="CAI77674.1"/>
    <property type="molecule type" value="mRNA"/>
</dbReference>
<dbReference type="GO" id="GO:0005576">
    <property type="term" value="C:extracellular region"/>
    <property type="evidence" value="ECO:0007669"/>
    <property type="project" value="UniProtKB-SubCell"/>
</dbReference>
<dbReference type="GO" id="GO:0042742">
    <property type="term" value="P:defense response to bacterium"/>
    <property type="evidence" value="ECO:0007669"/>
    <property type="project" value="UniProtKB-KW"/>
</dbReference>
<dbReference type="GO" id="GO:0045087">
    <property type="term" value="P:innate immune response"/>
    <property type="evidence" value="ECO:0007669"/>
    <property type="project" value="UniProtKB-KW"/>
</dbReference>
<dbReference type="InterPro" id="IPR004275">
    <property type="entry name" value="Frog_antimicrobial_propeptide"/>
</dbReference>
<dbReference type="InterPro" id="IPR016322">
    <property type="entry name" value="FSAP"/>
</dbReference>
<dbReference type="Pfam" id="PF03032">
    <property type="entry name" value="FSAP_sig_propep"/>
    <property type="match status" value="1"/>
</dbReference>
<dbReference type="PIRSF" id="PIRSF001822">
    <property type="entry name" value="Dermaseptin_precursor"/>
    <property type="match status" value="1"/>
</dbReference>
<reference key="1">
    <citation type="journal article" date="2005" name="Peptides">
        <title>Novel frenatins from the skin of the Australasian giant white-lipped tree frog, Litoria infrafrenata: cloning of precursor cDNAs and identification in defensive skin secretion.</title>
        <authorList>
            <person name="Zhou M."/>
            <person name="Chen T."/>
            <person name="Walker B."/>
            <person name="Shaw C."/>
        </authorList>
    </citation>
    <scope>NUCLEOTIDE SEQUENCE [MRNA]</scope>
    <scope>PROTEIN SEQUENCE OF 47-73</scope>
    <scope>MASS SPECTROMETRY</scope>
    <scope>SUBCELLULAR LOCATION</scope>
    <source>
        <tissue>Skin</tissue>
    </source>
</reference>
<keyword id="KW-0878">Amphibian defense peptide</keyword>
<keyword id="KW-0044">Antibiotic</keyword>
<keyword id="KW-0929">Antimicrobial</keyword>
<keyword id="KW-0903">Direct protein sequencing</keyword>
<keyword id="KW-0391">Immunity</keyword>
<keyword id="KW-0399">Innate immunity</keyword>
<keyword id="KW-0964">Secreted</keyword>
<keyword id="KW-0732">Signal</keyword>
<organism>
    <name type="scientific">Nyctimystes infrafrenatus</name>
    <name type="common">White-lipped tree frog</name>
    <name type="synonym">Litoria infrafrenata</name>
    <dbReference type="NCBI Taxonomy" id="61195"/>
    <lineage>
        <taxon>Eukaryota</taxon>
        <taxon>Metazoa</taxon>
        <taxon>Chordata</taxon>
        <taxon>Craniata</taxon>
        <taxon>Vertebrata</taxon>
        <taxon>Euteleostomi</taxon>
        <taxon>Amphibia</taxon>
        <taxon>Batrachia</taxon>
        <taxon>Anura</taxon>
        <taxon>Neobatrachia</taxon>
        <taxon>Hyloidea</taxon>
        <taxon>Hylidae</taxon>
        <taxon>Pelodryadinae</taxon>
        <taxon>Nyctimystes</taxon>
    </lineage>
</organism>
<feature type="signal peptide" evidence="2">
    <location>
        <begin position="1"/>
        <end position="22"/>
    </location>
</feature>
<feature type="propeptide" id="PRO_0000450239" evidence="7">
    <location>
        <begin position="23"/>
        <end position="46"/>
    </location>
</feature>
<feature type="peptide" id="PRO_5004250868" description="Frenatin 3.1" evidence="4">
    <location>
        <begin position="47"/>
        <end position="73"/>
    </location>
</feature>
<feature type="region of interest" description="Disordered" evidence="3">
    <location>
        <begin position="25"/>
        <end position="45"/>
    </location>
</feature>
<feature type="compositionally biased region" description="Acidic residues" evidence="3">
    <location>
        <begin position="30"/>
        <end position="42"/>
    </location>
</feature>